<protein>
    <recommendedName>
        <fullName>Glutamate receptor 2.6</fullName>
    </recommendedName>
    <alternativeName>
        <fullName>Ligand-gated ion channel 2.6</fullName>
    </alternativeName>
</protein>
<evidence type="ECO:0000250" key="1"/>
<evidence type="ECO:0000255" key="2"/>
<evidence type="ECO:0000256" key="3">
    <source>
        <dbReference type="SAM" id="MobiDB-lite"/>
    </source>
</evidence>
<evidence type="ECO:0000269" key="4">
    <source>
    </source>
</evidence>
<evidence type="ECO:0000305" key="5"/>
<reference key="1">
    <citation type="journal article" date="2000" name="Nature">
        <title>Sequence and analysis of chromosome 5 of the plant Arabidopsis thaliana.</title>
        <authorList>
            <person name="Tabata S."/>
            <person name="Kaneko T."/>
            <person name="Nakamura Y."/>
            <person name="Kotani H."/>
            <person name="Kato T."/>
            <person name="Asamizu E."/>
            <person name="Miyajima N."/>
            <person name="Sasamoto S."/>
            <person name="Kimura T."/>
            <person name="Hosouchi T."/>
            <person name="Kawashima K."/>
            <person name="Kohara M."/>
            <person name="Matsumoto M."/>
            <person name="Matsuno A."/>
            <person name="Muraki A."/>
            <person name="Nakayama S."/>
            <person name="Nakazaki N."/>
            <person name="Naruo K."/>
            <person name="Okumura S."/>
            <person name="Shinpo S."/>
            <person name="Takeuchi C."/>
            <person name="Wada T."/>
            <person name="Watanabe A."/>
            <person name="Yamada M."/>
            <person name="Yasuda M."/>
            <person name="Sato S."/>
            <person name="de la Bastide M."/>
            <person name="Huang E."/>
            <person name="Spiegel L."/>
            <person name="Gnoj L."/>
            <person name="O'Shaughnessy A."/>
            <person name="Preston R."/>
            <person name="Habermann K."/>
            <person name="Murray J."/>
            <person name="Johnson D."/>
            <person name="Rohlfing T."/>
            <person name="Nelson J."/>
            <person name="Stoneking T."/>
            <person name="Pepin K."/>
            <person name="Spieth J."/>
            <person name="Sekhon M."/>
            <person name="Armstrong J."/>
            <person name="Becker M."/>
            <person name="Belter E."/>
            <person name="Cordum H."/>
            <person name="Cordes M."/>
            <person name="Courtney L."/>
            <person name="Courtney W."/>
            <person name="Dante M."/>
            <person name="Du H."/>
            <person name="Edwards J."/>
            <person name="Fryman J."/>
            <person name="Haakensen B."/>
            <person name="Lamar E."/>
            <person name="Latreille P."/>
            <person name="Leonard S."/>
            <person name="Meyer R."/>
            <person name="Mulvaney E."/>
            <person name="Ozersky P."/>
            <person name="Riley A."/>
            <person name="Strowmatt C."/>
            <person name="Wagner-McPherson C."/>
            <person name="Wollam A."/>
            <person name="Yoakum M."/>
            <person name="Bell M."/>
            <person name="Dedhia N."/>
            <person name="Parnell L."/>
            <person name="Shah R."/>
            <person name="Rodriguez M."/>
            <person name="Hoon See L."/>
            <person name="Vil D."/>
            <person name="Baker J."/>
            <person name="Kirchoff K."/>
            <person name="Toth K."/>
            <person name="King L."/>
            <person name="Bahret A."/>
            <person name="Miller B."/>
            <person name="Marra M.A."/>
            <person name="Martienssen R."/>
            <person name="McCombie W.R."/>
            <person name="Wilson R.K."/>
            <person name="Murphy G."/>
            <person name="Bancroft I."/>
            <person name="Volckaert G."/>
            <person name="Wambutt R."/>
            <person name="Duesterhoeft A."/>
            <person name="Stiekema W."/>
            <person name="Pohl T."/>
            <person name="Entian K.-D."/>
            <person name="Terryn N."/>
            <person name="Hartley N."/>
            <person name="Bent E."/>
            <person name="Johnson S."/>
            <person name="Langham S.-A."/>
            <person name="McCullagh B."/>
            <person name="Robben J."/>
            <person name="Grymonprez B."/>
            <person name="Zimmermann W."/>
            <person name="Ramsperger U."/>
            <person name="Wedler H."/>
            <person name="Balke K."/>
            <person name="Wedler E."/>
            <person name="Peters S."/>
            <person name="van Staveren M."/>
            <person name="Dirkse W."/>
            <person name="Mooijman P."/>
            <person name="Klein Lankhorst R."/>
            <person name="Weitzenegger T."/>
            <person name="Bothe G."/>
            <person name="Rose M."/>
            <person name="Hauf J."/>
            <person name="Berneiser S."/>
            <person name="Hempel S."/>
            <person name="Feldpausch M."/>
            <person name="Lamberth S."/>
            <person name="Villarroel R."/>
            <person name="Gielen J."/>
            <person name="Ardiles W."/>
            <person name="Bents O."/>
            <person name="Lemcke K."/>
            <person name="Kolesov G."/>
            <person name="Mayer K.F.X."/>
            <person name="Rudd S."/>
            <person name="Schoof H."/>
            <person name="Schueller C."/>
            <person name="Zaccaria P."/>
            <person name="Mewes H.-W."/>
            <person name="Bevan M."/>
            <person name="Fransz P.F."/>
        </authorList>
    </citation>
    <scope>NUCLEOTIDE SEQUENCE [LARGE SCALE GENOMIC DNA]</scope>
    <source>
        <strain>cv. Columbia</strain>
    </source>
</reference>
<reference key="2">
    <citation type="journal article" date="2017" name="Plant J.">
        <title>Araport11: a complete reannotation of the Arabidopsis thaliana reference genome.</title>
        <authorList>
            <person name="Cheng C.Y."/>
            <person name="Krishnakumar V."/>
            <person name="Chan A.P."/>
            <person name="Thibaud-Nissen F."/>
            <person name="Schobel S."/>
            <person name="Town C.D."/>
        </authorList>
    </citation>
    <scope>GENOME REANNOTATION</scope>
    <source>
        <strain>cv. Columbia</strain>
    </source>
</reference>
<reference key="3">
    <citation type="journal article" date="2001" name="Science">
        <title>The identity of plant glutamate receptors.</title>
        <authorList>
            <person name="Lacombe B."/>
            <person name="Becker D."/>
            <person name="Hedrich R."/>
            <person name="DeSalle R."/>
            <person name="Hollmann M."/>
            <person name="Kwak J.M."/>
            <person name="Schroeder J.I."/>
            <person name="Le Novere N."/>
            <person name="Nam H.G."/>
            <person name="Spalding E.P."/>
            <person name="Tester M."/>
            <person name="Turano F.J."/>
            <person name="Chiu J."/>
            <person name="Coruzzi G."/>
        </authorList>
    </citation>
    <scope>GENE FAMILY</scope>
    <scope>NOMENCLATURE</scope>
</reference>
<reference key="4">
    <citation type="journal article" date="2002" name="Mol. Biol. Evol.">
        <title>Phylogenetic and expression analysis of the glutamate-receptor-like gene family in Arabidopsis thaliana.</title>
        <authorList>
            <person name="Chiu J.C."/>
            <person name="Brenner E.D."/>
            <person name="DeSalle R."/>
            <person name="Nitabach M.N."/>
            <person name="Holmes T.C."/>
            <person name="Coruzzi G.M."/>
        </authorList>
    </citation>
    <scope>TISSUE SPECIFICITY</scope>
</reference>
<name>GLR26_ARATH</name>
<proteinExistence type="evidence at transcript level"/>
<organism>
    <name type="scientific">Arabidopsis thaliana</name>
    <name type="common">Mouse-ear cress</name>
    <dbReference type="NCBI Taxonomy" id="3702"/>
    <lineage>
        <taxon>Eukaryota</taxon>
        <taxon>Viridiplantae</taxon>
        <taxon>Streptophyta</taxon>
        <taxon>Embryophyta</taxon>
        <taxon>Tracheophyta</taxon>
        <taxon>Spermatophyta</taxon>
        <taxon>Magnoliopsida</taxon>
        <taxon>eudicotyledons</taxon>
        <taxon>Gunneridae</taxon>
        <taxon>Pentapetalae</taxon>
        <taxon>rosids</taxon>
        <taxon>malvids</taxon>
        <taxon>Brassicales</taxon>
        <taxon>Brassicaceae</taxon>
        <taxon>Camelineae</taxon>
        <taxon>Arabidopsis</taxon>
    </lineage>
</organism>
<feature type="signal peptide" evidence="2">
    <location>
        <begin position="1"/>
        <end position="31"/>
    </location>
</feature>
<feature type="chain" id="PRO_0000011601" description="Glutamate receptor 2.6">
    <location>
        <begin position="32"/>
        <end position="967"/>
    </location>
</feature>
<feature type="topological domain" description="Extracellular" evidence="2">
    <location>
        <begin position="32"/>
        <end position="590"/>
    </location>
</feature>
<feature type="transmembrane region" description="Helical" evidence="2">
    <location>
        <begin position="591"/>
        <end position="611"/>
    </location>
</feature>
<feature type="topological domain" description="Cytoplasmic" evidence="2">
    <location>
        <begin position="612"/>
        <end position="621"/>
    </location>
</feature>
<feature type="transmembrane region" description="Helical" evidence="2">
    <location>
        <begin position="622"/>
        <end position="642"/>
    </location>
</feature>
<feature type="topological domain" description="Cytoplasmic" evidence="2">
    <location>
        <begin position="643"/>
        <end position="651"/>
    </location>
</feature>
<feature type="transmembrane region" description="Helical" evidence="2">
    <location>
        <begin position="652"/>
        <end position="672"/>
    </location>
</feature>
<feature type="topological domain" description="Extracellular" evidence="2">
    <location>
        <begin position="673"/>
        <end position="832"/>
    </location>
</feature>
<feature type="transmembrane region" description="Helical" evidence="2">
    <location>
        <begin position="833"/>
        <end position="853"/>
    </location>
</feature>
<feature type="topological domain" description="Cytoplasmic" evidence="2">
    <location>
        <begin position="854"/>
        <end position="967"/>
    </location>
</feature>
<feature type="region of interest" description="Disordered" evidence="3">
    <location>
        <begin position="864"/>
        <end position="913"/>
    </location>
</feature>
<feature type="compositionally biased region" description="Polar residues" evidence="3">
    <location>
        <begin position="864"/>
        <end position="874"/>
    </location>
</feature>
<feature type="glycosylation site" description="N-linked (GlcNAc...) asparagine" evidence="2">
    <location>
        <position position="45"/>
    </location>
</feature>
<feature type="glycosylation site" description="N-linked (GlcNAc...) asparagine" evidence="2">
    <location>
        <position position="57"/>
    </location>
</feature>
<feature type="glycosylation site" description="N-linked (GlcNAc...) asparagine" evidence="2">
    <location>
        <position position="121"/>
    </location>
</feature>
<feature type="glycosylation site" description="N-linked (GlcNAc...) asparagine" evidence="2">
    <location>
        <position position="336"/>
    </location>
</feature>
<feature type="glycosylation site" description="N-linked (GlcNAc...) asparagine" evidence="2">
    <location>
        <position position="345"/>
    </location>
</feature>
<feature type="glycosylation site" description="N-linked (GlcNAc...) asparagine" evidence="2">
    <location>
        <position position="424"/>
    </location>
</feature>
<feature type="glycosylation site" description="N-linked (GlcNAc...) asparagine" evidence="2">
    <location>
        <position position="550"/>
    </location>
</feature>
<feature type="glycosylation site" description="N-linked (GlcNAc...) asparagine" evidence="2">
    <location>
        <position position="795"/>
    </location>
</feature>
<comment type="function">
    <text>Glutamate-gated receptor that probably acts as a non-selective cation channel. May be involved in light-signal transduction and calcium homeostasis via the regulation of calcium influx into cells.</text>
</comment>
<comment type="subunit">
    <text evidence="1">May form heteromers.</text>
</comment>
<comment type="subcellular location">
    <subcellularLocation>
        <location>Membrane</location>
        <topology>Multi-pass membrane protein</topology>
    </subcellularLocation>
</comment>
<comment type="tissue specificity">
    <text evidence="4">Expressed predominantly in roots.</text>
</comment>
<comment type="similarity">
    <text evidence="5">Belongs to the glutamate-gated ion channel (TC 1.A.10.1) family.</text>
</comment>
<comment type="sequence caution" evidence="5">
    <conflict type="erroneous gene model prediction">
        <sequence resource="EMBL-CDS" id="AED91643"/>
    </conflict>
</comment>
<comment type="sequence caution" evidence="5">
    <conflict type="erroneous gene model prediction">
        <sequence resource="EMBL-CDS" id="CAB96653"/>
    </conflict>
</comment>
<accession>Q9LFN8</accession>
<accession>F4JWF4</accession>
<gene>
    <name type="primary">GLR2.6</name>
    <name type="ordered locus">At5g11180</name>
    <name type="ORF">F2I11_70</name>
</gene>
<keyword id="KW-0325">Glycoprotein</keyword>
<keyword id="KW-0407">Ion channel</keyword>
<keyword id="KW-0406">Ion transport</keyword>
<keyword id="KW-1071">Ligand-gated ion channel</keyword>
<keyword id="KW-0472">Membrane</keyword>
<keyword id="KW-0675">Receptor</keyword>
<keyword id="KW-1185">Reference proteome</keyword>
<keyword id="KW-0732">Signal</keyword>
<keyword id="KW-0812">Transmembrane</keyword>
<keyword id="KW-1133">Transmembrane helix</keyword>
<keyword id="KW-0813">Transport</keyword>
<dbReference type="EMBL" id="AL360314">
    <property type="protein sequence ID" value="CAB96653.1"/>
    <property type="status" value="ALT_SEQ"/>
    <property type="molecule type" value="Genomic_DNA"/>
</dbReference>
<dbReference type="EMBL" id="CP002688">
    <property type="protein sequence ID" value="AED91643.1"/>
    <property type="status" value="ALT_SEQ"/>
    <property type="molecule type" value="Genomic_DNA"/>
</dbReference>
<dbReference type="EMBL" id="CP002688">
    <property type="protein sequence ID" value="ANM68539.1"/>
    <property type="molecule type" value="Genomic_DNA"/>
</dbReference>
<dbReference type="RefSeq" id="NP_001330285.1">
    <property type="nucleotide sequence ID" value="NM_001343161.1"/>
</dbReference>
<dbReference type="RefSeq" id="NP_196679.1">
    <property type="nucleotide sequence ID" value="NM_121156.2"/>
</dbReference>
<dbReference type="SMR" id="Q9LFN8"/>
<dbReference type="FunCoup" id="Q9LFN8">
    <property type="interactions" value="141"/>
</dbReference>
<dbReference type="STRING" id="3702.Q9LFN8"/>
<dbReference type="GlyCosmos" id="Q9LFN8">
    <property type="glycosylation" value="8 sites, No reported glycans"/>
</dbReference>
<dbReference type="GlyGen" id="Q9LFN8">
    <property type="glycosylation" value="8 sites"/>
</dbReference>
<dbReference type="iPTMnet" id="Q9LFN8"/>
<dbReference type="PaxDb" id="3702-AT5G11180.1"/>
<dbReference type="EnsemblPlants" id="AT5G11180.2">
    <property type="protein sequence ID" value="AT5G11180.2"/>
    <property type="gene ID" value="AT5G11180"/>
</dbReference>
<dbReference type="GeneID" id="830988"/>
<dbReference type="Gramene" id="AT5G11180.2">
    <property type="protein sequence ID" value="AT5G11180.2"/>
    <property type="gene ID" value="AT5G11180"/>
</dbReference>
<dbReference type="KEGG" id="ath:AT5G11180"/>
<dbReference type="Araport" id="AT5G11180"/>
<dbReference type="TAIR" id="AT5G11180">
    <property type="gene designation" value="GLR2.6"/>
</dbReference>
<dbReference type="eggNOG" id="KOG1052">
    <property type="taxonomic scope" value="Eukaryota"/>
</dbReference>
<dbReference type="InParanoid" id="Q9LFN8"/>
<dbReference type="OMA" id="TFRTQRI"/>
<dbReference type="PhylomeDB" id="Q9LFN8"/>
<dbReference type="PRO" id="PR:Q9LFN8"/>
<dbReference type="Proteomes" id="UP000006548">
    <property type="component" value="Chromosome 5"/>
</dbReference>
<dbReference type="ExpressionAtlas" id="Q9LFN8">
    <property type="expression patterns" value="baseline and differential"/>
</dbReference>
<dbReference type="GO" id="GO:0005886">
    <property type="term" value="C:plasma membrane"/>
    <property type="evidence" value="ECO:0000250"/>
    <property type="project" value="UniProtKB"/>
</dbReference>
<dbReference type="GO" id="GO:0005262">
    <property type="term" value="F:calcium channel activity"/>
    <property type="evidence" value="ECO:0000250"/>
    <property type="project" value="UniProtKB"/>
</dbReference>
<dbReference type="GO" id="GO:0008066">
    <property type="term" value="F:glutamate receptor activity"/>
    <property type="evidence" value="ECO:0000250"/>
    <property type="project" value="UniProtKB"/>
</dbReference>
<dbReference type="GO" id="GO:0015276">
    <property type="term" value="F:ligand-gated monoatomic ion channel activity"/>
    <property type="evidence" value="ECO:0007669"/>
    <property type="project" value="InterPro"/>
</dbReference>
<dbReference type="GO" id="GO:0006816">
    <property type="term" value="P:calcium ion transport"/>
    <property type="evidence" value="ECO:0000250"/>
    <property type="project" value="UniProtKB"/>
</dbReference>
<dbReference type="GO" id="GO:0019722">
    <property type="term" value="P:calcium-mediated signaling"/>
    <property type="evidence" value="ECO:0000250"/>
    <property type="project" value="UniProtKB"/>
</dbReference>
<dbReference type="GO" id="GO:0071230">
    <property type="term" value="P:cellular response to amino acid stimulus"/>
    <property type="evidence" value="ECO:0000250"/>
    <property type="project" value="UniProtKB"/>
</dbReference>
<dbReference type="CDD" id="cd13686">
    <property type="entry name" value="GluR_Plant"/>
    <property type="match status" value="1"/>
</dbReference>
<dbReference type="CDD" id="cd19990">
    <property type="entry name" value="PBP1_GABAb_receptor_plant"/>
    <property type="match status" value="1"/>
</dbReference>
<dbReference type="FunFam" id="1.10.287.70:FF:000037">
    <property type="entry name" value="Glutamate receptor"/>
    <property type="match status" value="1"/>
</dbReference>
<dbReference type="FunFam" id="3.40.190.10:FF:000103">
    <property type="entry name" value="Glutamate receptor"/>
    <property type="match status" value="1"/>
</dbReference>
<dbReference type="FunFam" id="3.40.50.2300:FF:000169">
    <property type="entry name" value="Glutamate receptor"/>
    <property type="match status" value="1"/>
</dbReference>
<dbReference type="FunFam" id="3.40.50.2300:FF:000310">
    <property type="entry name" value="Glutamate receptor"/>
    <property type="match status" value="1"/>
</dbReference>
<dbReference type="FunFam" id="3.40.190.10:FF:000195">
    <property type="entry name" value="Glutamate receptor 2.7"/>
    <property type="match status" value="1"/>
</dbReference>
<dbReference type="Gene3D" id="1.10.287.70">
    <property type="match status" value="1"/>
</dbReference>
<dbReference type="Gene3D" id="3.40.50.2300">
    <property type="match status" value="2"/>
</dbReference>
<dbReference type="Gene3D" id="3.40.190.10">
    <property type="entry name" value="Periplasmic binding protein-like II"/>
    <property type="match status" value="2"/>
</dbReference>
<dbReference type="InterPro" id="IPR001828">
    <property type="entry name" value="ANF_lig-bd_rcpt"/>
</dbReference>
<dbReference type="InterPro" id="IPR044440">
    <property type="entry name" value="GABAb_receptor_plant_PBP1"/>
</dbReference>
<dbReference type="InterPro" id="IPR019594">
    <property type="entry name" value="Glu/Gly-bd"/>
</dbReference>
<dbReference type="InterPro" id="IPR015683">
    <property type="entry name" value="Ionotropic_Glu_rcpt"/>
</dbReference>
<dbReference type="InterPro" id="IPR001320">
    <property type="entry name" value="Iontro_rcpt_C"/>
</dbReference>
<dbReference type="InterPro" id="IPR017103">
    <property type="entry name" value="Iontropic_Glu_rcpt_pln"/>
</dbReference>
<dbReference type="InterPro" id="IPR028082">
    <property type="entry name" value="Peripla_BP_I"/>
</dbReference>
<dbReference type="PANTHER" id="PTHR34836">
    <property type="entry name" value="OS06G0188250 PROTEIN"/>
    <property type="match status" value="1"/>
</dbReference>
<dbReference type="PANTHER" id="PTHR34836:SF1">
    <property type="entry name" value="OS09G0428600 PROTEIN"/>
    <property type="match status" value="1"/>
</dbReference>
<dbReference type="Pfam" id="PF01094">
    <property type="entry name" value="ANF_receptor"/>
    <property type="match status" value="1"/>
</dbReference>
<dbReference type="Pfam" id="PF00060">
    <property type="entry name" value="Lig_chan"/>
    <property type="match status" value="1"/>
</dbReference>
<dbReference type="Pfam" id="PF10613">
    <property type="entry name" value="Lig_chan-Glu_bd"/>
    <property type="match status" value="1"/>
</dbReference>
<dbReference type="PIRSF" id="PIRSF037090">
    <property type="entry name" value="Iontro_Glu-like_rcpt_pln"/>
    <property type="match status" value="1"/>
</dbReference>
<dbReference type="SMART" id="SM00079">
    <property type="entry name" value="PBPe"/>
    <property type="match status" value="1"/>
</dbReference>
<dbReference type="SUPFAM" id="SSF53822">
    <property type="entry name" value="Periplasmic binding protein-like I"/>
    <property type="match status" value="1"/>
</dbReference>
<dbReference type="SUPFAM" id="SSF53850">
    <property type="entry name" value="Periplasmic binding protein-like II"/>
    <property type="match status" value="1"/>
</dbReference>
<dbReference type="SUPFAM" id="SSF81324">
    <property type="entry name" value="Voltage-gated potassium channels"/>
    <property type="match status" value="1"/>
</dbReference>
<sequence length="967" mass="108965">MSLFNHLLSRALPLWLLFFINFLVLLGKSQQEVLQVQVGIVLDTNATLAALSLRAINMSLSEFYNTHNGFKTRIVLNIRDSKRTVVGAAASALYLIKKREVVAIIGPGNSMQAPFLINLGNQSQVPIISFSASSPVLDSLRSPYFIRATHDDSSQVHAISAIIESFRWREVVPIYADNEFGEGILPYLVDAFQEINVRIRYRSAISVHSTDDLVKKELYKLMTMPTRVFIVHMLPDLGSRLFSIAKEIGMMTKGYVWIVTNGIADQMSVMGESSLENMHGVLGVKTYFSRSKELMYLETRWRKRFGGEELNNFECWGYDTATALAMSIEEISSNVNMSFSQTKRNTSRDDTGTDLDDLSFALSGPKLLQALATVSFKGVAGRFQLKNGKLEATTFKIVNIEESGERTVGFWKSKVGLVKSLRVNQTGIKISHSSHRLRPIIWPGDTIFVPKGWEFPTNAKKLRIAVPKKDGFNNFVEVTKDANTNAPTITGFCIDVFDTAMRQMPYAVPYEYIPFETPDGKPRGSYDEMVYHVFLGEFDGAVGDTTILANRSTYVDFALPYSETGIVVVVPVKDEREKGKWVFLKPLTRELWFLTAASFLYIGIMVWIFEYQASGDFRKQSIINKISNVFYFSFSTLFFAHMRPSESIFTRVLVVVWCFVLLILTQSYTATLTSMLTVQELRPTVRHMDDLRNSGVNIGYQTGSFTFERLKQMGYKESRLKTYDTPQEMHELFLKKSSNGGIDAAFDEVAYVKLFMAKYCSKYTIIEPTFKADGFGFAFPLGSPLVPDLSRQILNITEGETMKAIENKWLLGEKHCLDSTTSDSPIRLDHHSFEALFTIVFVVSMLLLLAMLVCRRYRQESKSGEINANNSPTDGNMRAPPNQPTDDNMRAPTSPPIDDQVLEPPGPALNEADDQDQLLNDEVNVGDRNEVDIIVEVDPTLVHRRNLITSKTIPTRRAALFSRIKSA</sequence>